<feature type="chain" id="PRO_0000177872" description="D-alanine--D-alanine ligase A">
    <location>
        <begin position="1"/>
        <end position="364"/>
    </location>
</feature>
<feature type="domain" description="ATP-grasp">
    <location>
        <begin position="145"/>
        <end position="348"/>
    </location>
</feature>
<feature type="binding site" evidence="1">
    <location>
        <begin position="175"/>
        <end position="230"/>
    </location>
    <ligand>
        <name>ATP</name>
        <dbReference type="ChEBI" id="CHEBI:30616"/>
    </ligand>
</feature>
<feature type="binding site" evidence="1">
    <location>
        <position position="302"/>
    </location>
    <ligand>
        <name>Mg(2+)</name>
        <dbReference type="ChEBI" id="CHEBI:18420"/>
        <label>1</label>
    </ligand>
</feature>
<feature type="binding site" evidence="1">
    <location>
        <position position="315"/>
    </location>
    <ligand>
        <name>Mg(2+)</name>
        <dbReference type="ChEBI" id="CHEBI:18420"/>
        <label>1</label>
    </ligand>
</feature>
<feature type="binding site" evidence="1">
    <location>
        <position position="315"/>
    </location>
    <ligand>
        <name>Mg(2+)</name>
        <dbReference type="ChEBI" id="CHEBI:18420"/>
        <label>2</label>
    </ligand>
</feature>
<feature type="binding site" evidence="1">
    <location>
        <position position="317"/>
    </location>
    <ligand>
        <name>Mg(2+)</name>
        <dbReference type="ChEBI" id="CHEBI:18420"/>
        <label>2</label>
    </ligand>
</feature>
<proteinExistence type="inferred from homology"/>
<reference key="1">
    <citation type="journal article" date="2002" name="Nucleic Acids Res.">
        <title>Genome sequence of Shigella flexneri 2a: insights into pathogenicity through comparison with genomes of Escherichia coli K12 and O157.</title>
        <authorList>
            <person name="Jin Q."/>
            <person name="Yuan Z."/>
            <person name="Xu J."/>
            <person name="Wang Y."/>
            <person name="Shen Y."/>
            <person name="Lu W."/>
            <person name="Wang J."/>
            <person name="Liu H."/>
            <person name="Yang J."/>
            <person name="Yang F."/>
            <person name="Zhang X."/>
            <person name="Zhang J."/>
            <person name="Yang G."/>
            <person name="Wu H."/>
            <person name="Qu D."/>
            <person name="Dong J."/>
            <person name="Sun L."/>
            <person name="Xue Y."/>
            <person name="Zhao A."/>
            <person name="Gao Y."/>
            <person name="Zhu J."/>
            <person name="Kan B."/>
            <person name="Ding K."/>
            <person name="Chen S."/>
            <person name="Cheng H."/>
            <person name="Yao Z."/>
            <person name="He B."/>
            <person name="Chen R."/>
            <person name="Ma D."/>
            <person name="Qiang B."/>
            <person name="Wen Y."/>
            <person name="Hou Y."/>
            <person name="Yu J."/>
        </authorList>
    </citation>
    <scope>NUCLEOTIDE SEQUENCE [LARGE SCALE GENOMIC DNA]</scope>
    <source>
        <strain>301 / Serotype 2a</strain>
    </source>
</reference>
<reference key="2">
    <citation type="journal article" date="2003" name="Infect. Immun.">
        <title>Complete genome sequence and comparative genomics of Shigella flexneri serotype 2a strain 2457T.</title>
        <authorList>
            <person name="Wei J."/>
            <person name="Goldberg M.B."/>
            <person name="Burland V."/>
            <person name="Venkatesan M.M."/>
            <person name="Deng W."/>
            <person name="Fournier G."/>
            <person name="Mayhew G.F."/>
            <person name="Plunkett G. III"/>
            <person name="Rose D.J."/>
            <person name="Darling A."/>
            <person name="Mau B."/>
            <person name="Perna N.T."/>
            <person name="Payne S.M."/>
            <person name="Runyen-Janecky L.J."/>
            <person name="Zhou S."/>
            <person name="Schwartz D.C."/>
            <person name="Blattner F.R."/>
        </authorList>
    </citation>
    <scope>NUCLEOTIDE SEQUENCE [LARGE SCALE GENOMIC DNA]</scope>
    <source>
        <strain>ATCC 700930 / 2457T / Serotype 2a</strain>
    </source>
</reference>
<comment type="function">
    <text evidence="1">Cell wall formation.</text>
</comment>
<comment type="catalytic activity">
    <reaction>
        <text>2 D-alanine + ATP = D-alanyl-D-alanine + ADP + phosphate + H(+)</text>
        <dbReference type="Rhea" id="RHEA:11224"/>
        <dbReference type="ChEBI" id="CHEBI:15378"/>
        <dbReference type="ChEBI" id="CHEBI:30616"/>
        <dbReference type="ChEBI" id="CHEBI:43474"/>
        <dbReference type="ChEBI" id="CHEBI:57416"/>
        <dbReference type="ChEBI" id="CHEBI:57822"/>
        <dbReference type="ChEBI" id="CHEBI:456216"/>
        <dbReference type="EC" id="6.3.2.4"/>
    </reaction>
</comment>
<comment type="cofactor">
    <cofactor evidence="1">
        <name>Mg(2+)</name>
        <dbReference type="ChEBI" id="CHEBI:18420"/>
    </cofactor>
    <cofactor evidence="1">
        <name>Mn(2+)</name>
        <dbReference type="ChEBI" id="CHEBI:29035"/>
    </cofactor>
    <text evidence="1">Binds 2 magnesium or manganese ions per subunit.</text>
</comment>
<comment type="pathway">
    <text>Cell wall biogenesis; peptidoglycan biosynthesis.</text>
</comment>
<comment type="subcellular location">
    <subcellularLocation>
        <location evidence="1">Cytoplasm</location>
    </subcellularLocation>
</comment>
<comment type="similarity">
    <text evidence="2">Belongs to the D-alanine--D-alanine ligase family.</text>
</comment>
<name>DDLA_SHIFL</name>
<protein>
    <recommendedName>
        <fullName>D-alanine--D-alanine ligase A</fullName>
        <ecNumber>6.3.2.4</ecNumber>
    </recommendedName>
    <alternativeName>
        <fullName>D-Ala-D-Ala ligase A</fullName>
    </alternativeName>
    <alternativeName>
        <fullName>D-alanylalanine synthetase A</fullName>
    </alternativeName>
</protein>
<keyword id="KW-0067">ATP-binding</keyword>
<keyword id="KW-0133">Cell shape</keyword>
<keyword id="KW-0961">Cell wall biogenesis/degradation</keyword>
<keyword id="KW-0963">Cytoplasm</keyword>
<keyword id="KW-0436">Ligase</keyword>
<keyword id="KW-0460">Magnesium</keyword>
<keyword id="KW-0464">Manganese</keyword>
<keyword id="KW-0479">Metal-binding</keyword>
<keyword id="KW-0547">Nucleotide-binding</keyword>
<keyword id="KW-0573">Peptidoglycan synthesis</keyword>
<keyword id="KW-1185">Reference proteome</keyword>
<gene>
    <name type="primary">ddlA</name>
    <name type="ordered locus">SF0232</name>
    <name type="ordered locus">S0254</name>
</gene>
<dbReference type="EC" id="6.3.2.4"/>
<dbReference type="EMBL" id="AE005674">
    <property type="protein sequence ID" value="AAN41894.1"/>
    <property type="molecule type" value="Genomic_DNA"/>
</dbReference>
<dbReference type="EMBL" id="AE014073">
    <property type="protein sequence ID" value="AAP15782.1"/>
    <property type="molecule type" value="Genomic_DNA"/>
</dbReference>
<dbReference type="RefSeq" id="WP_000413677.1">
    <property type="nucleotide sequence ID" value="NZ_WPGW01000161.1"/>
</dbReference>
<dbReference type="SMR" id="P0A6K0"/>
<dbReference type="STRING" id="198214.SF0232"/>
<dbReference type="PaxDb" id="198214-SF0232"/>
<dbReference type="GeneID" id="93777081"/>
<dbReference type="KEGG" id="sfl:SF0232"/>
<dbReference type="KEGG" id="sfx:S0254"/>
<dbReference type="PATRIC" id="fig|198214.7.peg.263"/>
<dbReference type="HOGENOM" id="CLU_039268_0_1_6"/>
<dbReference type="UniPathway" id="UPA00219"/>
<dbReference type="Proteomes" id="UP000001006">
    <property type="component" value="Chromosome"/>
</dbReference>
<dbReference type="Proteomes" id="UP000002673">
    <property type="component" value="Chromosome"/>
</dbReference>
<dbReference type="GO" id="GO:0005829">
    <property type="term" value="C:cytosol"/>
    <property type="evidence" value="ECO:0007669"/>
    <property type="project" value="TreeGrafter"/>
</dbReference>
<dbReference type="GO" id="GO:0005524">
    <property type="term" value="F:ATP binding"/>
    <property type="evidence" value="ECO:0007669"/>
    <property type="project" value="UniProtKB-KW"/>
</dbReference>
<dbReference type="GO" id="GO:0008716">
    <property type="term" value="F:D-alanine-D-alanine ligase activity"/>
    <property type="evidence" value="ECO:0007669"/>
    <property type="project" value="UniProtKB-UniRule"/>
</dbReference>
<dbReference type="GO" id="GO:0046872">
    <property type="term" value="F:metal ion binding"/>
    <property type="evidence" value="ECO:0007669"/>
    <property type="project" value="UniProtKB-KW"/>
</dbReference>
<dbReference type="GO" id="GO:0071555">
    <property type="term" value="P:cell wall organization"/>
    <property type="evidence" value="ECO:0007669"/>
    <property type="project" value="UniProtKB-KW"/>
</dbReference>
<dbReference type="GO" id="GO:0009252">
    <property type="term" value="P:peptidoglycan biosynthetic process"/>
    <property type="evidence" value="ECO:0007669"/>
    <property type="project" value="UniProtKB-UniRule"/>
</dbReference>
<dbReference type="GO" id="GO:0008360">
    <property type="term" value="P:regulation of cell shape"/>
    <property type="evidence" value="ECO:0007669"/>
    <property type="project" value="UniProtKB-KW"/>
</dbReference>
<dbReference type="FunFam" id="3.30.1490.20:FF:000007">
    <property type="entry name" value="D-alanine--D-alanine ligase"/>
    <property type="match status" value="1"/>
</dbReference>
<dbReference type="FunFam" id="3.30.470.20:FF:000008">
    <property type="entry name" value="D-alanine--D-alanine ligase"/>
    <property type="match status" value="1"/>
</dbReference>
<dbReference type="FunFam" id="3.40.50.20:FF:000015">
    <property type="entry name" value="D-alanine--D-alanine ligase"/>
    <property type="match status" value="1"/>
</dbReference>
<dbReference type="Gene3D" id="3.40.50.20">
    <property type="match status" value="1"/>
</dbReference>
<dbReference type="Gene3D" id="3.30.1490.20">
    <property type="entry name" value="ATP-grasp fold, A domain"/>
    <property type="match status" value="1"/>
</dbReference>
<dbReference type="Gene3D" id="3.30.470.20">
    <property type="entry name" value="ATP-grasp fold, B domain"/>
    <property type="match status" value="1"/>
</dbReference>
<dbReference type="HAMAP" id="MF_00047">
    <property type="entry name" value="Dala_Dala_lig"/>
    <property type="match status" value="1"/>
</dbReference>
<dbReference type="InterPro" id="IPR011761">
    <property type="entry name" value="ATP-grasp"/>
</dbReference>
<dbReference type="InterPro" id="IPR013815">
    <property type="entry name" value="ATP_grasp_subdomain_1"/>
</dbReference>
<dbReference type="InterPro" id="IPR000291">
    <property type="entry name" value="D-Ala_lig_Van_CS"/>
</dbReference>
<dbReference type="InterPro" id="IPR005905">
    <property type="entry name" value="D_ala_D_ala"/>
</dbReference>
<dbReference type="InterPro" id="IPR011095">
    <property type="entry name" value="Dala_Dala_lig_C"/>
</dbReference>
<dbReference type="InterPro" id="IPR011127">
    <property type="entry name" value="Dala_Dala_lig_N"/>
</dbReference>
<dbReference type="InterPro" id="IPR016185">
    <property type="entry name" value="PreATP-grasp_dom_sf"/>
</dbReference>
<dbReference type="NCBIfam" id="TIGR01205">
    <property type="entry name" value="D_ala_D_alaTIGR"/>
    <property type="match status" value="1"/>
</dbReference>
<dbReference type="NCBIfam" id="NF002378">
    <property type="entry name" value="PRK01372.1"/>
    <property type="match status" value="1"/>
</dbReference>
<dbReference type="NCBIfam" id="NF002525">
    <property type="entry name" value="PRK01966.1-1"/>
    <property type="match status" value="1"/>
</dbReference>
<dbReference type="NCBIfam" id="NF002528">
    <property type="entry name" value="PRK01966.1-4"/>
    <property type="match status" value="1"/>
</dbReference>
<dbReference type="PANTHER" id="PTHR23132">
    <property type="entry name" value="D-ALANINE--D-ALANINE LIGASE"/>
    <property type="match status" value="1"/>
</dbReference>
<dbReference type="PANTHER" id="PTHR23132:SF25">
    <property type="entry name" value="D-ALANINE--D-ALANINE LIGASE A"/>
    <property type="match status" value="1"/>
</dbReference>
<dbReference type="Pfam" id="PF07478">
    <property type="entry name" value="Dala_Dala_lig_C"/>
    <property type="match status" value="1"/>
</dbReference>
<dbReference type="Pfam" id="PF01820">
    <property type="entry name" value="Dala_Dala_lig_N"/>
    <property type="match status" value="1"/>
</dbReference>
<dbReference type="PIRSF" id="PIRSF039102">
    <property type="entry name" value="Ddl/VanB"/>
    <property type="match status" value="1"/>
</dbReference>
<dbReference type="SUPFAM" id="SSF56059">
    <property type="entry name" value="Glutathione synthetase ATP-binding domain-like"/>
    <property type="match status" value="1"/>
</dbReference>
<dbReference type="SUPFAM" id="SSF52440">
    <property type="entry name" value="PreATP-grasp domain"/>
    <property type="match status" value="1"/>
</dbReference>
<dbReference type="PROSITE" id="PS50975">
    <property type="entry name" value="ATP_GRASP"/>
    <property type="match status" value="1"/>
</dbReference>
<dbReference type="PROSITE" id="PS00843">
    <property type="entry name" value="DALA_DALA_LIGASE_1"/>
    <property type="match status" value="1"/>
</dbReference>
<dbReference type="PROSITE" id="PS00844">
    <property type="entry name" value="DALA_DALA_LIGASE_2"/>
    <property type="match status" value="1"/>
</dbReference>
<accession>P0A6K0</accession>
<accession>P23844</accession>
<sequence>MEKLRVGIVFGGKSAEHEVSLQSAKNIVDAIDKSRFDVVLLGIDKQGQWHVSDASNYLLNADDPAHIALRPSATSLAQVPGKHEHQLIDAQNGQPLPTVDVIFPIVHGTLGEDGSLQGMLRVANLPFVGSDVLASAACMDKDVTKRLLRDAGLNIAPFITLTRANRHNISFAEVESKLGLPLFVKPANQGSSVGVSKVTSEEQYAIAVDLAFEFDHKVIVEQGIKGREIECAVLGNDNPQASTCGEIVLTSDFYAYDTKYIDEDGAKVVVPAAIAPEINDKIRAIAVQAYQTLGCAGMARVDVFLTPENEVVINEINTLPGFTNISMYPKLWQASGLGYTDLITRLIELALERHAADNALKTTM</sequence>
<evidence type="ECO:0000250" key="1"/>
<evidence type="ECO:0000305" key="2"/>
<organism>
    <name type="scientific">Shigella flexneri</name>
    <dbReference type="NCBI Taxonomy" id="623"/>
    <lineage>
        <taxon>Bacteria</taxon>
        <taxon>Pseudomonadati</taxon>
        <taxon>Pseudomonadota</taxon>
        <taxon>Gammaproteobacteria</taxon>
        <taxon>Enterobacterales</taxon>
        <taxon>Enterobacteriaceae</taxon>
        <taxon>Shigella</taxon>
    </lineage>
</organism>